<dbReference type="EMBL" id="AY911323">
    <property type="protein sequence ID" value="AAW82091.1"/>
    <property type="molecule type" value="mRNA"/>
</dbReference>
<dbReference type="EMBL" id="BC102754">
    <property type="protein sequence ID" value="AAI02755.1"/>
    <property type="molecule type" value="mRNA"/>
</dbReference>
<dbReference type="RefSeq" id="NP_001020520.1">
    <property type="nucleotide sequence ID" value="NM_001025349.2"/>
</dbReference>
<dbReference type="SMR" id="Q56K04"/>
<dbReference type="FunCoup" id="Q56K04">
    <property type="interactions" value="482"/>
</dbReference>
<dbReference type="STRING" id="9913.ENSBTAP00000070227"/>
<dbReference type="PaxDb" id="9913-ENSBTAP00000054703"/>
<dbReference type="GeneID" id="574093"/>
<dbReference type="KEGG" id="bta:574093"/>
<dbReference type="CTD" id="1396"/>
<dbReference type="eggNOG" id="KOG1700">
    <property type="taxonomic scope" value="Eukaryota"/>
</dbReference>
<dbReference type="HOGENOM" id="CLU_026811_4_1_1"/>
<dbReference type="InParanoid" id="Q56K04"/>
<dbReference type="OrthoDB" id="25654at2759"/>
<dbReference type="Proteomes" id="UP000009136">
    <property type="component" value="Unplaced"/>
</dbReference>
<dbReference type="GO" id="GO:0005737">
    <property type="term" value="C:cytoplasm"/>
    <property type="evidence" value="ECO:0000250"/>
    <property type="project" value="UniProtKB"/>
</dbReference>
<dbReference type="GO" id="GO:0042277">
    <property type="term" value="F:peptide binding"/>
    <property type="evidence" value="ECO:0000250"/>
    <property type="project" value="UniProtKB"/>
</dbReference>
<dbReference type="GO" id="GO:0008270">
    <property type="term" value="F:zinc ion binding"/>
    <property type="evidence" value="ECO:0000250"/>
    <property type="project" value="UniProtKB"/>
</dbReference>
<dbReference type="GO" id="GO:0071236">
    <property type="term" value="P:cellular response to antibiotic"/>
    <property type="evidence" value="ECO:0000250"/>
    <property type="project" value="UniProtKB"/>
</dbReference>
<dbReference type="GO" id="GO:0071493">
    <property type="term" value="P:cellular response to UV-B"/>
    <property type="evidence" value="ECO:0000250"/>
    <property type="project" value="UniProtKB"/>
</dbReference>
<dbReference type="GO" id="GO:0006955">
    <property type="term" value="P:immune response"/>
    <property type="evidence" value="ECO:0007669"/>
    <property type="project" value="Ensembl"/>
</dbReference>
<dbReference type="GO" id="GO:0008630">
    <property type="term" value="P:intrinsic apoptotic signaling pathway in response to DNA damage"/>
    <property type="evidence" value="ECO:0000250"/>
    <property type="project" value="UniProtKB"/>
</dbReference>
<dbReference type="GO" id="GO:0060741">
    <property type="term" value="P:prostate gland stromal morphogenesis"/>
    <property type="evidence" value="ECO:0007669"/>
    <property type="project" value="Ensembl"/>
</dbReference>
<dbReference type="GO" id="GO:0010468">
    <property type="term" value="P:regulation of gene expression"/>
    <property type="evidence" value="ECO:0000318"/>
    <property type="project" value="GO_Central"/>
</dbReference>
<dbReference type="GO" id="GO:0010043">
    <property type="term" value="P:response to zinc ion"/>
    <property type="evidence" value="ECO:0000250"/>
    <property type="project" value="UniProtKB"/>
</dbReference>
<dbReference type="CDD" id="cd09478">
    <property type="entry name" value="LIM_CRIP"/>
    <property type="match status" value="1"/>
</dbReference>
<dbReference type="FunFam" id="2.10.110.10:FF:000054">
    <property type="entry name" value="Cysteine-rich protein 1"/>
    <property type="match status" value="1"/>
</dbReference>
<dbReference type="Gene3D" id="2.10.110.10">
    <property type="entry name" value="Cysteine Rich Protein"/>
    <property type="match status" value="1"/>
</dbReference>
<dbReference type="InterPro" id="IPR001781">
    <property type="entry name" value="Znf_LIM"/>
</dbReference>
<dbReference type="PANTHER" id="PTHR46074:SF3">
    <property type="entry name" value="CYSTEINE-RICH PROTEIN 1"/>
    <property type="match status" value="1"/>
</dbReference>
<dbReference type="PANTHER" id="PTHR46074">
    <property type="entry name" value="CYSTEINE-RICH PROTEIN CRIP FAMILY MEMBER"/>
    <property type="match status" value="1"/>
</dbReference>
<dbReference type="Pfam" id="PF00412">
    <property type="entry name" value="LIM"/>
    <property type="match status" value="1"/>
</dbReference>
<dbReference type="SMART" id="SM00132">
    <property type="entry name" value="LIM"/>
    <property type="match status" value="1"/>
</dbReference>
<dbReference type="SUPFAM" id="SSF57716">
    <property type="entry name" value="Glucocorticoid receptor-like (DNA-binding domain)"/>
    <property type="match status" value="2"/>
</dbReference>
<dbReference type="PROSITE" id="PS00478">
    <property type="entry name" value="LIM_DOMAIN_1"/>
    <property type="match status" value="1"/>
</dbReference>
<dbReference type="PROSITE" id="PS50023">
    <property type="entry name" value="LIM_DOMAIN_2"/>
    <property type="match status" value="1"/>
</dbReference>
<protein>
    <recommendedName>
        <fullName>Cysteine-rich protein 1</fullName>
        <shortName>CRP-1</shortName>
    </recommendedName>
</protein>
<name>CRIP1_BOVIN</name>
<accession>Q56K04</accession>
<reference key="1">
    <citation type="submission" date="2005-01" db="EMBL/GenBank/DDBJ databases">
        <title>Analysis of sequences obtained from constructed full-length bovine cDNA libraries.</title>
        <authorList>
            <person name="Yu J."/>
            <person name="Meng Y."/>
            <person name="Wang Z."/>
            <person name="Hansen C."/>
            <person name="Li C."/>
            <person name="Moore S.S."/>
        </authorList>
    </citation>
    <scope>NUCLEOTIDE SEQUENCE [LARGE SCALE MRNA]</scope>
    <source>
        <tissue>Lymphoid epithelium</tissue>
    </source>
</reference>
<reference key="2">
    <citation type="submission" date="2005-08" db="EMBL/GenBank/DDBJ databases">
        <authorList>
            <consortium name="NIH - Mammalian Gene Collection (MGC) project"/>
        </authorList>
    </citation>
    <scope>NUCLEOTIDE SEQUENCE [LARGE SCALE MRNA]</scope>
    <source>
        <strain>Crossbred X Angus</strain>
        <tissue>Ileum</tissue>
    </source>
</reference>
<feature type="chain" id="PRO_0000075706" description="Cysteine-rich protein 1">
    <location>
        <begin position="1"/>
        <end position="77"/>
    </location>
</feature>
<feature type="domain" description="LIM zinc-binding" evidence="4">
    <location>
        <begin position="2"/>
        <end position="63"/>
    </location>
</feature>
<feature type="modified residue" description="N6-acetyllysine" evidence="2">
    <location>
        <position position="9"/>
    </location>
</feature>
<feature type="modified residue" description="N6-acetyllysine" evidence="3">
    <location>
        <position position="22"/>
    </location>
</feature>
<feature type="modified residue" description="Omega-N-methylarginine" evidence="3">
    <location>
        <position position="68"/>
    </location>
</feature>
<evidence type="ECO:0000250" key="1"/>
<evidence type="ECO:0000250" key="2">
    <source>
        <dbReference type="UniProtKB" id="P50238"/>
    </source>
</evidence>
<evidence type="ECO:0000250" key="3">
    <source>
        <dbReference type="UniProtKB" id="P63254"/>
    </source>
</evidence>
<evidence type="ECO:0000255" key="4">
    <source>
        <dbReference type="PROSITE-ProRule" id="PRU00125"/>
    </source>
</evidence>
<gene>
    <name type="primary">CRIP1</name>
</gene>
<comment type="function">
    <text evidence="1">Seems to have a role in zinc absorption and may function as an intracellular zinc transport protein.</text>
</comment>
<organism>
    <name type="scientific">Bos taurus</name>
    <name type="common">Bovine</name>
    <dbReference type="NCBI Taxonomy" id="9913"/>
    <lineage>
        <taxon>Eukaryota</taxon>
        <taxon>Metazoa</taxon>
        <taxon>Chordata</taxon>
        <taxon>Craniata</taxon>
        <taxon>Vertebrata</taxon>
        <taxon>Euteleostomi</taxon>
        <taxon>Mammalia</taxon>
        <taxon>Eutheria</taxon>
        <taxon>Laurasiatheria</taxon>
        <taxon>Artiodactyla</taxon>
        <taxon>Ruminantia</taxon>
        <taxon>Pecora</taxon>
        <taxon>Bovidae</taxon>
        <taxon>Bovinae</taxon>
        <taxon>Bos</taxon>
    </lineage>
</organism>
<sequence>MPKCPKCSKEVYFAERVTSLGKDWHRPCLKCEKCGKTLTSGGHAEHEGKPYCNHPCYAAMFGPKGFGRGGAESHTFK</sequence>
<keyword id="KW-0007">Acetylation</keyword>
<keyword id="KW-0440">LIM domain</keyword>
<keyword id="KW-0479">Metal-binding</keyword>
<keyword id="KW-0488">Methylation</keyword>
<keyword id="KW-1185">Reference proteome</keyword>
<keyword id="KW-0862">Zinc</keyword>
<proteinExistence type="inferred from homology"/>